<dbReference type="EC" id="2.8.1.6" evidence="1"/>
<dbReference type="EMBL" id="AP009324">
    <property type="protein sequence ID" value="BAF79292.1"/>
    <property type="molecule type" value="Genomic_DNA"/>
</dbReference>
<dbReference type="RefSeq" id="WP_001046645.1">
    <property type="nucleotide sequence ID" value="NC_009782.1"/>
</dbReference>
<dbReference type="SMR" id="A7X669"/>
<dbReference type="KEGG" id="saw:SAHV_2409"/>
<dbReference type="HOGENOM" id="CLU_033172_2_1_9"/>
<dbReference type="UniPathway" id="UPA00078">
    <property type="reaction ID" value="UER00162"/>
</dbReference>
<dbReference type="GO" id="GO:0051537">
    <property type="term" value="F:2 iron, 2 sulfur cluster binding"/>
    <property type="evidence" value="ECO:0007669"/>
    <property type="project" value="UniProtKB-KW"/>
</dbReference>
<dbReference type="GO" id="GO:0051539">
    <property type="term" value="F:4 iron, 4 sulfur cluster binding"/>
    <property type="evidence" value="ECO:0007669"/>
    <property type="project" value="UniProtKB-KW"/>
</dbReference>
<dbReference type="GO" id="GO:0004076">
    <property type="term" value="F:biotin synthase activity"/>
    <property type="evidence" value="ECO:0007669"/>
    <property type="project" value="UniProtKB-UniRule"/>
</dbReference>
<dbReference type="GO" id="GO:0005506">
    <property type="term" value="F:iron ion binding"/>
    <property type="evidence" value="ECO:0007669"/>
    <property type="project" value="UniProtKB-UniRule"/>
</dbReference>
<dbReference type="GO" id="GO:0009102">
    <property type="term" value="P:biotin biosynthetic process"/>
    <property type="evidence" value="ECO:0007669"/>
    <property type="project" value="UniProtKB-UniRule"/>
</dbReference>
<dbReference type="CDD" id="cd01335">
    <property type="entry name" value="Radical_SAM"/>
    <property type="match status" value="1"/>
</dbReference>
<dbReference type="FunFam" id="3.20.20.70:FF:000026">
    <property type="entry name" value="Biotin synthase"/>
    <property type="match status" value="1"/>
</dbReference>
<dbReference type="Gene3D" id="3.20.20.70">
    <property type="entry name" value="Aldolase class I"/>
    <property type="match status" value="1"/>
</dbReference>
<dbReference type="HAMAP" id="MF_01694">
    <property type="entry name" value="BioB"/>
    <property type="match status" value="1"/>
</dbReference>
<dbReference type="InterPro" id="IPR013785">
    <property type="entry name" value="Aldolase_TIM"/>
</dbReference>
<dbReference type="InterPro" id="IPR010722">
    <property type="entry name" value="BATS_dom"/>
</dbReference>
<dbReference type="InterPro" id="IPR002684">
    <property type="entry name" value="Biotin_synth/BioAB"/>
</dbReference>
<dbReference type="InterPro" id="IPR024177">
    <property type="entry name" value="Biotin_synthase"/>
</dbReference>
<dbReference type="InterPro" id="IPR006638">
    <property type="entry name" value="Elp3/MiaA/NifB-like_rSAM"/>
</dbReference>
<dbReference type="InterPro" id="IPR007197">
    <property type="entry name" value="rSAM"/>
</dbReference>
<dbReference type="NCBIfam" id="TIGR00433">
    <property type="entry name" value="bioB"/>
    <property type="match status" value="1"/>
</dbReference>
<dbReference type="PANTHER" id="PTHR22976">
    <property type="entry name" value="BIOTIN SYNTHASE"/>
    <property type="match status" value="1"/>
</dbReference>
<dbReference type="PANTHER" id="PTHR22976:SF2">
    <property type="entry name" value="BIOTIN SYNTHASE, MITOCHONDRIAL"/>
    <property type="match status" value="1"/>
</dbReference>
<dbReference type="Pfam" id="PF06968">
    <property type="entry name" value="BATS"/>
    <property type="match status" value="1"/>
</dbReference>
<dbReference type="Pfam" id="PF04055">
    <property type="entry name" value="Radical_SAM"/>
    <property type="match status" value="1"/>
</dbReference>
<dbReference type="PIRSF" id="PIRSF001619">
    <property type="entry name" value="Biotin_synth"/>
    <property type="match status" value="1"/>
</dbReference>
<dbReference type="SFLD" id="SFLDG01060">
    <property type="entry name" value="BATS_domain_containing"/>
    <property type="match status" value="1"/>
</dbReference>
<dbReference type="SFLD" id="SFLDG01278">
    <property type="entry name" value="biotin_synthase_like"/>
    <property type="match status" value="1"/>
</dbReference>
<dbReference type="SMART" id="SM00876">
    <property type="entry name" value="BATS"/>
    <property type="match status" value="1"/>
</dbReference>
<dbReference type="SMART" id="SM00729">
    <property type="entry name" value="Elp3"/>
    <property type="match status" value="1"/>
</dbReference>
<dbReference type="SUPFAM" id="SSF102114">
    <property type="entry name" value="Radical SAM enzymes"/>
    <property type="match status" value="1"/>
</dbReference>
<dbReference type="PROSITE" id="PS51918">
    <property type="entry name" value="RADICAL_SAM"/>
    <property type="match status" value="1"/>
</dbReference>
<reference key="1">
    <citation type="journal article" date="2008" name="Antimicrob. Agents Chemother.">
        <title>Mutated response regulator graR is responsible for phenotypic conversion of Staphylococcus aureus from heterogeneous vancomycin-intermediate resistance to vancomycin-intermediate resistance.</title>
        <authorList>
            <person name="Neoh H.-M."/>
            <person name="Cui L."/>
            <person name="Yuzawa H."/>
            <person name="Takeuchi F."/>
            <person name="Matsuo M."/>
            <person name="Hiramatsu K."/>
        </authorList>
    </citation>
    <scope>NUCLEOTIDE SEQUENCE [LARGE SCALE GENOMIC DNA]</scope>
    <source>
        <strain>Mu3 / ATCC 700698</strain>
    </source>
</reference>
<evidence type="ECO:0000255" key="1">
    <source>
        <dbReference type="HAMAP-Rule" id="MF_01694"/>
    </source>
</evidence>
<evidence type="ECO:0000255" key="2">
    <source>
        <dbReference type="PROSITE-ProRule" id="PRU01266"/>
    </source>
</evidence>
<protein>
    <recommendedName>
        <fullName evidence="1">Biotin synthase</fullName>
        <ecNumber evidence="1">2.8.1.6</ecNumber>
    </recommendedName>
</protein>
<proteinExistence type="inferred from homology"/>
<sequence>MNLAKRILQGEQLTKETVLKIYEDTNIDTLDLLNEAYILRKHYFGKKVKLNMILNAKSGICPENCGYCGQSRDIKQKQRYALIPEEQIIDGAKVAHDNHIGTYCIVMSGRGPSDKEVDHISNTVRTIKSQHPQLKICACLGLTNDEQAKKLKSAGVDRYNHNINTSENYHDNVVTTHSYKDRTDTIELMKANNISPCSGVICGMGESNQDIVDMAFALKEMDADSIPINFLHPIKGTKFGSMDDLTPMKCLRIVALFRLINPTKEIRIAGGREVNLRSLQPLALKAANSIFVGDYLITGGQPNQLDYDMINDLGFEIDYDTCENKENKNDVSRAN</sequence>
<feature type="chain" id="PRO_0000381642" description="Biotin synthase">
    <location>
        <begin position="1"/>
        <end position="335"/>
    </location>
</feature>
<feature type="domain" description="Radical SAM core" evidence="2">
    <location>
        <begin position="43"/>
        <end position="269"/>
    </location>
</feature>
<feature type="binding site" evidence="1">
    <location>
        <position position="61"/>
    </location>
    <ligand>
        <name>[4Fe-4S] cluster</name>
        <dbReference type="ChEBI" id="CHEBI:49883"/>
        <note>4Fe-4S-S-AdoMet</note>
    </ligand>
</feature>
<feature type="binding site" evidence="1">
    <location>
        <position position="65"/>
    </location>
    <ligand>
        <name>[4Fe-4S] cluster</name>
        <dbReference type="ChEBI" id="CHEBI:49883"/>
        <note>4Fe-4S-S-AdoMet</note>
    </ligand>
</feature>
<feature type="binding site" evidence="1">
    <location>
        <position position="68"/>
    </location>
    <ligand>
        <name>[4Fe-4S] cluster</name>
        <dbReference type="ChEBI" id="CHEBI:49883"/>
        <note>4Fe-4S-S-AdoMet</note>
    </ligand>
</feature>
<feature type="binding site" evidence="1">
    <location>
        <position position="104"/>
    </location>
    <ligand>
        <name>[2Fe-2S] cluster</name>
        <dbReference type="ChEBI" id="CHEBI:190135"/>
    </ligand>
</feature>
<feature type="binding site" evidence="1">
    <location>
        <position position="137"/>
    </location>
    <ligand>
        <name>[2Fe-2S] cluster</name>
        <dbReference type="ChEBI" id="CHEBI:190135"/>
    </ligand>
</feature>
<feature type="binding site" evidence="1">
    <location>
        <position position="197"/>
    </location>
    <ligand>
        <name>[2Fe-2S] cluster</name>
        <dbReference type="ChEBI" id="CHEBI:190135"/>
    </ligand>
</feature>
<feature type="binding site" evidence="1">
    <location>
        <position position="267"/>
    </location>
    <ligand>
        <name>[2Fe-2S] cluster</name>
        <dbReference type="ChEBI" id="CHEBI:190135"/>
    </ligand>
</feature>
<organism>
    <name type="scientific">Staphylococcus aureus (strain Mu3 / ATCC 700698)</name>
    <dbReference type="NCBI Taxonomy" id="418127"/>
    <lineage>
        <taxon>Bacteria</taxon>
        <taxon>Bacillati</taxon>
        <taxon>Bacillota</taxon>
        <taxon>Bacilli</taxon>
        <taxon>Bacillales</taxon>
        <taxon>Staphylococcaceae</taxon>
        <taxon>Staphylococcus</taxon>
    </lineage>
</organism>
<comment type="function">
    <text evidence="1">Catalyzes the conversion of dethiobiotin (DTB) to biotin by the insertion of a sulfur atom into dethiobiotin via a radical-based mechanism.</text>
</comment>
<comment type="catalytic activity">
    <reaction evidence="1">
        <text>(4R,5S)-dethiobiotin + (sulfur carrier)-SH + 2 reduced [2Fe-2S]-[ferredoxin] + 2 S-adenosyl-L-methionine = (sulfur carrier)-H + biotin + 2 5'-deoxyadenosine + 2 L-methionine + 2 oxidized [2Fe-2S]-[ferredoxin]</text>
        <dbReference type="Rhea" id="RHEA:22060"/>
        <dbReference type="Rhea" id="RHEA-COMP:10000"/>
        <dbReference type="Rhea" id="RHEA-COMP:10001"/>
        <dbReference type="Rhea" id="RHEA-COMP:14737"/>
        <dbReference type="Rhea" id="RHEA-COMP:14739"/>
        <dbReference type="ChEBI" id="CHEBI:17319"/>
        <dbReference type="ChEBI" id="CHEBI:29917"/>
        <dbReference type="ChEBI" id="CHEBI:33737"/>
        <dbReference type="ChEBI" id="CHEBI:33738"/>
        <dbReference type="ChEBI" id="CHEBI:57586"/>
        <dbReference type="ChEBI" id="CHEBI:57844"/>
        <dbReference type="ChEBI" id="CHEBI:59789"/>
        <dbReference type="ChEBI" id="CHEBI:64428"/>
        <dbReference type="ChEBI" id="CHEBI:149473"/>
        <dbReference type="EC" id="2.8.1.6"/>
    </reaction>
</comment>
<comment type="cofactor">
    <cofactor evidence="1">
        <name>[4Fe-4S] cluster</name>
        <dbReference type="ChEBI" id="CHEBI:49883"/>
    </cofactor>
    <text evidence="1">Binds 1 [4Fe-4S] cluster. The cluster is coordinated with 3 cysteines and an exchangeable S-adenosyl-L-methionine.</text>
</comment>
<comment type="cofactor">
    <cofactor evidence="1">
        <name>[2Fe-2S] cluster</name>
        <dbReference type="ChEBI" id="CHEBI:190135"/>
    </cofactor>
    <text evidence="1">Binds 1 [2Fe-2S] cluster. The cluster is coordinated with 3 cysteines and 1 arginine.</text>
</comment>
<comment type="pathway">
    <text evidence="1">Cofactor biosynthesis; biotin biosynthesis; biotin from 7,8-diaminononanoate: step 2/2.</text>
</comment>
<comment type="subunit">
    <text evidence="1">Homodimer.</text>
</comment>
<comment type="similarity">
    <text evidence="1">Belongs to the radical SAM superfamily. Biotin synthase family.</text>
</comment>
<accession>A7X669</accession>
<gene>
    <name evidence="1" type="primary">bioB</name>
    <name type="ordered locus">SAHV_2409</name>
</gene>
<name>BIOB_STAA1</name>
<keyword id="KW-0001">2Fe-2S</keyword>
<keyword id="KW-0004">4Fe-4S</keyword>
<keyword id="KW-0093">Biotin biosynthesis</keyword>
<keyword id="KW-0408">Iron</keyword>
<keyword id="KW-0411">Iron-sulfur</keyword>
<keyword id="KW-0479">Metal-binding</keyword>
<keyword id="KW-0949">S-adenosyl-L-methionine</keyword>
<keyword id="KW-0808">Transferase</keyword>